<sequence length="583" mass="62929">MKAIIVLLMVVTSNADRICTGITSSNSPHVVKTATQGEVNVTGVIPLTTTPTKSHFANLKGTKTRGKLCPNCLNCTDLDVALGRPKCMGTIPSAKASILHEVKPVTSGCFPIMHDRTKIRQLPNLLRGYENIRLSTRNVINAERAPGGPYIIGTSGSCPNVTNGNGFFATMAWAVPKDNKTATNPLTVEVPYICTKGEDQITVWGFHSDTETQMVKLYGDSKPQKFTSSANGVTTHYVSQIGGFPNQTEDGGLPQSGRIVVDYMVQKPGKTGTIVYQRGVLLPQKVWCASGRSKVIKGSLPLIGEADCLHEKYGGLNKSKPYYTGEHAKAIGNCPIWVKTPLKLANGTKYRPPAKLLKERGFFGAIAGFLEGGWEGMIAGWHGYTSHGAHGVAVAADLKSTQEAINKITKNLNSLSELEVKNLQRLSGAMDELHNEILELDEKVDDLRADTISSQIELAVLLSNEGIINSEDEHLLALERKLKKMLGPSAVDIGNGCFETKHKCNQTCLDRIAAGTFNAGEFSLPTFDSLNITAASLNDDGLDNHTILLYYSTAASSLAVTLMIAIFIVYMVSRDNVSCSICL</sequence>
<reference key="1">
    <citation type="journal article" date="1983" name="Nucleic Acids Res.">
        <title>Complete nucleotide sequence of the influenza B/Singapore/222/79 virus hemagglutinin gene and comparison with the B/Lee/40 hemagglutinin.</title>
        <authorList>
            <person name="Verhoeyen M."/>
            <person name="van Rompuy L."/>
            <person name="Min Jou W."/>
            <person name="Huylebroeck D."/>
            <person name="Fiers W."/>
        </authorList>
    </citation>
    <scope>NUCLEOTIDE SEQUENCE</scope>
</reference>
<keyword id="KW-1015">Disulfide bond</keyword>
<keyword id="KW-1170">Fusion of virus membrane with host endosomal membrane</keyword>
<keyword id="KW-1168">Fusion of virus membrane with host membrane</keyword>
<keyword id="KW-0325">Glycoprotein</keyword>
<keyword id="KW-0348">Hemagglutinin</keyword>
<keyword id="KW-1032">Host cell membrane</keyword>
<keyword id="KW-1043">Host membrane</keyword>
<keyword id="KW-0945">Host-virus interaction</keyword>
<keyword id="KW-0449">Lipoprotein</keyword>
<keyword id="KW-0472">Membrane</keyword>
<keyword id="KW-0564">Palmitate</keyword>
<keyword id="KW-0732">Signal</keyword>
<keyword id="KW-0812">Transmembrane</keyword>
<keyword id="KW-1133">Transmembrane helix</keyword>
<keyword id="KW-1161">Viral attachment to host cell</keyword>
<keyword id="KW-0261">Viral envelope protein</keyword>
<keyword id="KW-1162">Viral penetration into host cytoplasm</keyword>
<keyword id="KW-0946">Virion</keyword>
<keyword id="KW-1164">Virus endocytosis by host</keyword>
<keyword id="KW-1160">Virus entry into host cell</keyword>
<evidence type="ECO:0000255" key="1">
    <source>
        <dbReference type="HAMAP-Rule" id="MF_04072"/>
    </source>
</evidence>
<evidence type="ECO:0000305" key="2"/>
<proteinExistence type="inferred from homology"/>
<organism>
    <name type="scientific">Influenza B virus (strain B/Singapore/222/1979)</name>
    <dbReference type="NCBI Taxonomy" id="107417"/>
    <lineage>
        <taxon>Viruses</taxon>
        <taxon>Riboviria</taxon>
        <taxon>Orthornavirae</taxon>
        <taxon>Negarnaviricota</taxon>
        <taxon>Polyploviricotina</taxon>
        <taxon>Insthoviricetes</taxon>
        <taxon>Articulavirales</taxon>
        <taxon>Orthomyxoviridae</taxon>
        <taxon>Betainfluenzavirus</taxon>
        <taxon>Betainfluenzavirus influenzae</taxon>
        <taxon>Influenza B virus</taxon>
    </lineage>
</organism>
<protein>
    <recommendedName>
        <fullName evidence="1">Hemagglutinin</fullName>
    </recommendedName>
    <component>
        <recommendedName>
            <fullName evidence="1">Hemagglutinin HA1 chain</fullName>
        </recommendedName>
    </component>
    <component>
        <recommendedName>
            <fullName evidence="1">Hemagglutinin HA2 chain</fullName>
        </recommendedName>
    </component>
</protein>
<gene>
    <name evidence="1" type="primary">HA</name>
</gene>
<dbReference type="EMBL" id="X00897">
    <property type="protein sequence ID" value="CAA25425.1"/>
    <property type="molecule type" value="Unassigned_RNA"/>
</dbReference>
<dbReference type="PIR" id="A04074">
    <property type="entry name" value="HMIVBS"/>
</dbReference>
<dbReference type="SMR" id="P03463"/>
<dbReference type="GlyCosmos" id="P03463">
    <property type="glycosylation" value="10 sites, No reported glycans"/>
</dbReference>
<dbReference type="Proteomes" id="UP000137758">
    <property type="component" value="Genome"/>
</dbReference>
<dbReference type="GO" id="GO:0020002">
    <property type="term" value="C:host cell plasma membrane"/>
    <property type="evidence" value="ECO:0007669"/>
    <property type="project" value="UniProtKB-SubCell"/>
</dbReference>
<dbReference type="GO" id="GO:0016020">
    <property type="term" value="C:membrane"/>
    <property type="evidence" value="ECO:0007669"/>
    <property type="project" value="UniProtKB-UniRule"/>
</dbReference>
<dbReference type="GO" id="GO:0019031">
    <property type="term" value="C:viral envelope"/>
    <property type="evidence" value="ECO:0007669"/>
    <property type="project" value="UniProtKB-UniRule"/>
</dbReference>
<dbReference type="GO" id="GO:0055036">
    <property type="term" value="C:virion membrane"/>
    <property type="evidence" value="ECO:0007669"/>
    <property type="project" value="UniProtKB-SubCell"/>
</dbReference>
<dbReference type="GO" id="GO:0046789">
    <property type="term" value="F:host cell surface receptor binding"/>
    <property type="evidence" value="ECO:0007669"/>
    <property type="project" value="UniProtKB-UniRule"/>
</dbReference>
<dbReference type="GO" id="GO:0075509">
    <property type="term" value="P:endocytosis involved in viral entry into host cell"/>
    <property type="evidence" value="ECO:0007669"/>
    <property type="project" value="UniProtKB-KW"/>
</dbReference>
<dbReference type="GO" id="GO:0039654">
    <property type="term" value="P:fusion of virus membrane with host endosome membrane"/>
    <property type="evidence" value="ECO:0007669"/>
    <property type="project" value="UniProtKB-UniRule"/>
</dbReference>
<dbReference type="GO" id="GO:0019064">
    <property type="term" value="P:fusion of virus membrane with host plasma membrane"/>
    <property type="evidence" value="ECO:0007669"/>
    <property type="project" value="InterPro"/>
</dbReference>
<dbReference type="GO" id="GO:0046761">
    <property type="term" value="P:viral budding from plasma membrane"/>
    <property type="evidence" value="ECO:0007669"/>
    <property type="project" value="UniProtKB-UniRule"/>
</dbReference>
<dbReference type="GO" id="GO:0019062">
    <property type="term" value="P:virion attachment to host cell"/>
    <property type="evidence" value="ECO:0007669"/>
    <property type="project" value="UniProtKB-KW"/>
</dbReference>
<dbReference type="Gene3D" id="3.90.20.10">
    <property type="match status" value="1"/>
</dbReference>
<dbReference type="Gene3D" id="3.90.209.20">
    <property type="match status" value="1"/>
</dbReference>
<dbReference type="Gene3D" id="2.10.77.10">
    <property type="entry name" value="Hemagglutinin Chain A, Domain 2"/>
    <property type="match status" value="1"/>
</dbReference>
<dbReference type="HAMAP" id="MF_04072">
    <property type="entry name" value="INFV_HEMA"/>
    <property type="match status" value="1"/>
</dbReference>
<dbReference type="InterPro" id="IPR008980">
    <property type="entry name" value="Capsid_hemagglutn"/>
</dbReference>
<dbReference type="InterPro" id="IPR013828">
    <property type="entry name" value="Hemagglutn_HA1_a/b_dom_sf"/>
</dbReference>
<dbReference type="InterPro" id="IPR001364">
    <property type="entry name" value="Hemagglutn_influenz_A/B"/>
</dbReference>
<dbReference type="InterPro" id="IPR000386">
    <property type="entry name" value="Hemagglutn_influenz_B"/>
</dbReference>
<dbReference type="Pfam" id="PF00509">
    <property type="entry name" value="Hemagglutinin"/>
    <property type="match status" value="1"/>
</dbReference>
<dbReference type="PRINTS" id="PR00329">
    <property type="entry name" value="HEMAGGLUTN12"/>
</dbReference>
<dbReference type="PRINTS" id="PR00331">
    <property type="entry name" value="HEMAGGLUTN2"/>
</dbReference>
<dbReference type="SUPFAM" id="SSF58064">
    <property type="entry name" value="Influenza hemagglutinin (stalk)"/>
    <property type="match status" value="1"/>
</dbReference>
<dbReference type="SUPFAM" id="SSF49818">
    <property type="entry name" value="Viral protein domain"/>
    <property type="match status" value="1"/>
</dbReference>
<organismHost>
    <name type="scientific">Homo sapiens</name>
    <name type="common">Human</name>
    <dbReference type="NCBI Taxonomy" id="9606"/>
</organismHost>
<feature type="signal peptide" evidence="1">
    <location>
        <begin position="1"/>
        <end position="15"/>
    </location>
</feature>
<feature type="chain" id="PRO_0000440549" description="Hemagglutinin" evidence="1">
    <location>
        <begin position="16"/>
        <end position="583"/>
    </location>
</feature>
<feature type="chain" id="PRO_0000039127" description="Hemagglutinin HA1 chain" evidence="1">
    <location>
        <begin position="16"/>
        <end position="359"/>
    </location>
</feature>
<feature type="chain" id="PRO_0000039128" description="Hemagglutinin HA2 chain" evidence="1">
    <location>
        <begin position="361"/>
        <end position="583"/>
    </location>
</feature>
<feature type="topological domain" description="Extracellular" evidence="1">
    <location>
        <begin position="16"/>
        <end position="551"/>
    </location>
</feature>
<feature type="transmembrane region" description="Helical" evidence="1">
    <location>
        <begin position="552"/>
        <end position="572"/>
    </location>
</feature>
<feature type="topological domain" description="Cytoplasmic" evidence="1">
    <location>
        <begin position="573"/>
        <end position="583"/>
    </location>
</feature>
<feature type="site" description="Cleavage; by host" evidence="1">
    <location>
        <begin position="360"/>
        <end position="361"/>
    </location>
</feature>
<feature type="lipid moiety-binding region" description="S-palmitoyl cysteine; by host" evidence="1">
    <location>
        <position position="579"/>
    </location>
</feature>
<feature type="lipid moiety-binding region" description="S-palmitoyl cysteine; by host" evidence="1">
    <location>
        <position position="582"/>
    </location>
</feature>
<feature type="glycosylation site" description="N-linked (GlcNAc...) asparagine; by host" evidence="1">
    <location>
        <position position="40"/>
    </location>
</feature>
<feature type="glycosylation site" description="N-linked (GlcNAc...) asparagine; by host" evidence="1">
    <location>
        <position position="74"/>
    </location>
</feature>
<feature type="glycosylation site" description="N-linked (GlcNAc...) asparagine; by host" evidence="1">
    <location>
        <position position="160"/>
    </location>
</feature>
<feature type="glycosylation site" description="N-linked (GlcNAc...) asparagine; by host" evidence="1">
    <location>
        <position position="179"/>
    </location>
</feature>
<feature type="glycosylation site" description="N-linked (GlcNAc...) asparagine; by host" evidence="1">
    <location>
        <position position="246"/>
    </location>
</feature>
<feature type="glycosylation site" description="N-linked (GlcNAc...) asparagine; by host" evidence="1">
    <location>
        <position position="317"/>
    </location>
</feature>
<feature type="glycosylation site" description="N-linked (GlcNAc...) asparagine; by host" evidence="1">
    <location>
        <position position="346"/>
    </location>
</feature>
<feature type="glycosylation site" description="N-linked (GlcNAc...) asparagine; by host" evidence="1">
    <location>
        <position position="505"/>
    </location>
</feature>
<feature type="glycosylation site" description="N-linked (GlcNAc...) asparagine; by host" evidence="1">
    <location>
        <position position="531"/>
    </location>
</feature>
<feature type="glycosylation site" description="N-linked (GlcNAc...) asparagine; by host" evidence="1">
    <location>
        <position position="544"/>
    </location>
</feature>
<feature type="disulfide bond" description="Interchain (between HA1 and HA2 chains)" evidence="1">
    <location>
        <begin position="19"/>
        <end position="497"/>
    </location>
</feature>
<feature type="disulfide bond" evidence="1">
    <location>
        <begin position="75"/>
        <end position="87"/>
    </location>
</feature>
<feature type="disulfide bond" evidence="1">
    <location>
        <begin position="109"/>
        <end position="158"/>
    </location>
</feature>
<feature type="disulfide bond" evidence="1">
    <location>
        <begin position="504"/>
        <end position="508"/>
    </location>
</feature>
<name>HEMA_INBSI</name>
<comment type="function">
    <text evidence="1">Binds to sialic acid-containing receptors on the cell surface, bringing about the attachment of the virus particle to the cell. Plays a major role in the determination of host range restriction and virulence. Class I viral fusion protein. Responsible for penetration of the virus into the cell cytoplasm by mediating the fusion of the membrane of the endocytosed virus particle with the endosomal membrane. Low pH in endosomes induce an irreversible conformational change in HA2, releasing the fusion hydrophobic peptide. Several trimers are required to form a competent fusion pore.</text>
</comment>
<comment type="subunit">
    <text evidence="1">Homotrimer of disulfide-linked HA1-HA2.</text>
</comment>
<comment type="subcellular location">
    <subcellularLocation>
        <location evidence="1">Virion membrane</location>
        <topology evidence="1">Single-pass type I membrane protein</topology>
    </subcellularLocation>
    <subcellularLocation>
        <location evidence="1">Host apical cell membrane</location>
        <topology evidence="1">Single-pass type I membrane protein</topology>
    </subcellularLocation>
    <text evidence="1">Targeted to the apical plasma membrane in epithelial polarized cells through a signal present in the transmembrane domain. Associated with glycosphingolipid- and cholesterol-enriched detergent-resistant lipid rafts.</text>
</comment>
<comment type="PTM">
    <text evidence="1">Palmitoylated.</text>
</comment>
<comment type="PTM">
    <text evidence="1">In natural infection, inactive HA is matured into HA1 and HA2 outside the cell by one or more trypsin-like, arginine-specific endoprotease secreted by the bronchial epithelial cells. One identified protease that may be involved in this process is secreted in lungs by club cells.</text>
</comment>
<comment type="miscellaneous">
    <text>Major glycoprotein, comprises over 80% of the envelope proteins present in virus particle.</text>
</comment>
<comment type="miscellaneous">
    <text>The extent of infection into host organism is determined by HA. Influenza viruses bud from the apical surface of polarized epithelial cells (e.g. bronchial epithelial cells) into lumen of lungs and are therefore usually pneumotropic. The reason is that HA is cleaved by tryptase clara which is restricted to lungs. However, HAs of H5 and H7 pantropic avian viruses subtypes can be cleaved by furin and subtilisin-type enzymes, allowing the virus to grow in other organs than lungs.</text>
</comment>
<comment type="miscellaneous">
    <text evidence="2">The influenza B genome consist of 8 RNA segments. Genetic variation of hemagglutinin and/or neuraminidase genes results in the emergence of new influenza strains. The mechanism of variation can be the result of point mutations or the result of genetic reassortment between segments of two different strains.</text>
</comment>
<comment type="similarity">
    <text evidence="1">Belongs to the influenza viruses hemagglutinin family.</text>
</comment>
<accession>P03463</accession>